<dbReference type="EMBL" id="KE138826">
    <property type="protein sequence ID" value="EPT30670.1"/>
    <property type="molecule type" value="Genomic_DNA"/>
</dbReference>
<dbReference type="RefSeq" id="XP_002366700.1">
    <property type="nucleotide sequence ID" value="XM_002366659.2"/>
</dbReference>
<dbReference type="EnsemblProtists" id="TGME49_240810-t26_1">
    <property type="protein sequence ID" value="TGME49_240810-t26_1-p1-CDS1"/>
    <property type="gene ID" value="TGME49_240810"/>
</dbReference>
<dbReference type="GeneID" id="7901186"/>
<dbReference type="KEGG" id="tgo:TGME49_240810"/>
<dbReference type="VEuPathDB" id="ToxoDB:TGME49_240810"/>
<dbReference type="OrthoDB" id="330047at2759"/>
<dbReference type="PhylomeDB" id="A0A125YQS6"/>
<dbReference type="Proteomes" id="UP000001529">
    <property type="component" value="Chromosome VI"/>
</dbReference>
<dbReference type="GO" id="GO:0016020">
    <property type="term" value="C:membrane"/>
    <property type="evidence" value="ECO:0007669"/>
    <property type="project" value="UniProtKB-KW"/>
</dbReference>
<dbReference type="Gene3D" id="1.20.1250.20">
    <property type="entry name" value="MFS general substrate transporter like domains"/>
    <property type="match status" value="1"/>
</dbReference>
<dbReference type="InterPro" id="IPR036259">
    <property type="entry name" value="MFS_trans_sf"/>
</dbReference>
<dbReference type="InterPro" id="IPR052599">
    <property type="entry name" value="SLC43A_AATransporter"/>
</dbReference>
<dbReference type="PANTHER" id="PTHR20772">
    <property type="entry name" value="PROTEIN FMP42"/>
    <property type="match status" value="1"/>
</dbReference>
<dbReference type="PANTHER" id="PTHR20772:SF2">
    <property type="entry name" value="PROTEIN FMP42"/>
    <property type="match status" value="1"/>
</dbReference>
<dbReference type="SUPFAM" id="SSF103473">
    <property type="entry name" value="MFS general substrate transporter"/>
    <property type="match status" value="1"/>
</dbReference>
<reference evidence="10" key="1">
    <citation type="submission" date="2013-04" db="EMBL/GenBank/DDBJ databases">
        <authorList>
            <person name="Sibley D."/>
            <person name="Venepally P."/>
            <person name="Karamycheva S."/>
            <person name="Hadjithomas M."/>
            <person name="Khan A."/>
            <person name="Brunk B."/>
            <person name="Roos D."/>
            <person name="Caler E."/>
            <person name="Lorenzi H."/>
        </authorList>
    </citation>
    <scope>NUCLEOTIDE SEQUENCE [LARGE SCALE GENOMIC DNA]</scope>
    <source>
        <strain evidence="10">ATCC 50611 / Me49</strain>
    </source>
</reference>
<reference key="2">
    <citation type="journal article" date="2019" name="PLoS Pathog.">
        <title>The tyrosine transporter of Toxoplasma gondii is a member of the newly defined apicomplexan amino acid transporter (ApiAT) family.</title>
        <authorList>
            <person name="Parker K.E.R."/>
            <person name="Fairweather S.J."/>
            <person name="Rajendran E."/>
            <person name="Blume M."/>
            <person name="McConville M.J."/>
            <person name="Broeer S."/>
            <person name="Kirk K."/>
            <person name="van Dooren G.G."/>
        </authorList>
    </citation>
    <scope>SUBCELLULAR LOCATION</scope>
    <scope>DEVELOPMENTAL STAGE</scope>
    <scope>DISRUPTION PHENOTYPE</scope>
</reference>
<reference key="3">
    <citation type="journal article" date="2021" name="PLoS Pathog.">
        <title>Substrate-mediated regulation of the arginine transporter of Toxoplasma gondii.</title>
        <authorList>
            <person name="Rajendran E."/>
            <person name="Clark M."/>
            <person name="Goulart C."/>
            <person name="Steinhoefel B."/>
            <person name="Tjhin E.T."/>
            <person name="Gross S."/>
            <person name="Smith N.C."/>
            <person name="Kirk K."/>
            <person name="van Dooren G.G."/>
        </authorList>
    </citation>
    <scope>INDUCTION</scope>
</reference>
<reference key="4">
    <citation type="journal article" date="2021" name="PLoS Pathog.">
        <title>Coordinated action of multiple transporters in the acquisition of essential cationic amino acids by the intracellular parasite Toxoplasma gondii.</title>
        <authorList>
            <person name="Fairweather S.J."/>
            <person name="Rajendran E."/>
            <person name="Blume M."/>
            <person name="Javed K."/>
            <person name="Steinhoefel B."/>
            <person name="McConville M.J."/>
            <person name="Kirk K."/>
            <person name="Broeer S."/>
            <person name="van Dooren G.G."/>
        </authorList>
    </citation>
    <scope>FUNCTION</scope>
    <scope>TRANSPORTER ACTIVITY</scope>
    <scope>BIOPHYSICOCHEMICAL PROPERTIES</scope>
    <scope>SUBCELLULAR LOCATION</scope>
    <scope>DISRUPTION PHENOTYPE</scope>
</reference>
<comment type="function">
    <text evidence="5">Cationic and neutral amino acid transporter (PubMed:34432856). Transports lysine with high affinity (PubMed:34432856). Can transport arginine, methionine and leucine (PubMed:34432856). Does not require inorganic ions, such as sodium, chloride, potassium, calcium or magnesium, for transport activity (PubMed:34432856).</text>
</comment>
<comment type="catalytic activity">
    <reaction evidence="5">
        <text>L-lysine(in) = L-lysine(out)</text>
        <dbReference type="Rhea" id="RHEA:70935"/>
        <dbReference type="ChEBI" id="CHEBI:32551"/>
    </reaction>
</comment>
<comment type="catalytic activity">
    <reaction evidence="5">
        <text>L-arginine(in) = L-arginine(out)</text>
        <dbReference type="Rhea" id="RHEA:32143"/>
        <dbReference type="ChEBI" id="CHEBI:32682"/>
    </reaction>
</comment>
<comment type="catalytic activity">
    <reaction evidence="5">
        <text>L-methionine(in) = L-methionine(out)</text>
        <dbReference type="Rhea" id="RHEA:70939"/>
        <dbReference type="ChEBI" id="CHEBI:57844"/>
    </reaction>
</comment>
<comment type="catalytic activity">
    <reaction evidence="5">
        <text>L-leucine(in) = L-leucine(out)</text>
        <dbReference type="Rhea" id="RHEA:73011"/>
        <dbReference type="ChEBI" id="CHEBI:57427"/>
    </reaction>
</comment>
<comment type="biophysicochemical properties">
    <kinetics>
        <KM evidence="5">22.8 uM for lysine</KM>
        <KM evidence="5">748 uM for arginine</KM>
        <text evidence="5">kcat is 0.042 sec(-1) for lysine (PubMed:34432856). kcat is 0.28 sec(-1) for arginine (PubMed:34432856).</text>
    </kinetics>
</comment>
<comment type="subcellular location">
    <subcellularLocation>
        <location evidence="3 5">Cell membrane</location>
        <topology evidence="1">Multi-pass membrane protein</topology>
    </subcellularLocation>
</comment>
<comment type="developmental stage">
    <text evidence="3">Expressed in tachyzoites (at protein level).</text>
</comment>
<comment type="induction">
    <text evidence="4">Expression is not affected by changes in arginine or lysine concentrations in the environment.</text>
</comment>
<comment type="disruption phenotype">
    <text evidence="3 5">Repeated attempts to generate a knockout failed (PubMed:30742695). Conditional knockdown results in impaired parasite proliferation (PubMed:34432856). Reduced uptake of lysine and arginine (PubMed:34432856).</text>
</comment>
<comment type="similarity">
    <text evidence="8">Belongs to the SLC43A transporter (TC 2.A.1.44) family.</text>
</comment>
<evidence type="ECO:0000255" key="1"/>
<evidence type="ECO:0000255" key="2">
    <source>
        <dbReference type="PROSITE-ProRule" id="PRU00498"/>
    </source>
</evidence>
<evidence type="ECO:0000269" key="3">
    <source>
    </source>
</evidence>
<evidence type="ECO:0000269" key="4">
    <source>
    </source>
</evidence>
<evidence type="ECO:0000269" key="5">
    <source>
    </source>
</evidence>
<evidence type="ECO:0000303" key="6">
    <source>
    </source>
</evidence>
<evidence type="ECO:0000303" key="7">
    <source>
    </source>
</evidence>
<evidence type="ECO:0000305" key="8"/>
<evidence type="ECO:0000312" key="9">
    <source>
        <dbReference type="EMBL" id="EPT30670.1"/>
    </source>
</evidence>
<evidence type="ECO:0000312" key="10">
    <source>
        <dbReference type="Proteomes" id="UP000001529"/>
    </source>
</evidence>
<name>AT6_TOXGM</name>
<gene>
    <name evidence="8" type="primary">ApiAT6-1</name>
    <name evidence="9" type="ORF">TGME49_240810</name>
</gene>
<keyword id="KW-0029">Amino-acid transport</keyword>
<keyword id="KW-1003">Cell membrane</keyword>
<keyword id="KW-0325">Glycoprotein</keyword>
<keyword id="KW-0472">Membrane</keyword>
<keyword id="KW-1185">Reference proteome</keyword>
<keyword id="KW-0812">Transmembrane</keyword>
<keyword id="KW-1133">Transmembrane helix</keyword>
<keyword id="KW-0813">Transport</keyword>
<feature type="chain" id="PRO_0000462370" description="Amino acid transporter 6-1">
    <location>
        <begin position="1"/>
        <end position="566"/>
    </location>
</feature>
<feature type="transmembrane region" description="Helical" evidence="1">
    <location>
        <begin position="65"/>
        <end position="85"/>
    </location>
</feature>
<feature type="transmembrane region" description="Helical" evidence="1">
    <location>
        <begin position="137"/>
        <end position="157"/>
    </location>
</feature>
<feature type="transmembrane region" description="Helical" evidence="1">
    <location>
        <begin position="158"/>
        <end position="178"/>
    </location>
</feature>
<feature type="transmembrane region" description="Helical" evidence="1">
    <location>
        <begin position="187"/>
        <end position="207"/>
    </location>
</feature>
<feature type="transmembrane region" description="Helical" evidence="1">
    <location>
        <begin position="216"/>
        <end position="236"/>
    </location>
</feature>
<feature type="transmembrane region" description="Helical" evidence="1">
    <location>
        <begin position="250"/>
        <end position="270"/>
    </location>
</feature>
<feature type="transmembrane region" description="Helical" evidence="1">
    <location>
        <begin position="334"/>
        <end position="354"/>
    </location>
</feature>
<feature type="transmembrane region" description="Helical" evidence="1">
    <location>
        <begin position="367"/>
        <end position="387"/>
    </location>
</feature>
<feature type="transmembrane region" description="Helical" evidence="1">
    <location>
        <begin position="392"/>
        <end position="412"/>
    </location>
</feature>
<feature type="transmembrane region" description="Helical" evidence="1">
    <location>
        <begin position="423"/>
        <end position="443"/>
    </location>
</feature>
<feature type="transmembrane region" description="Helical" evidence="1">
    <location>
        <begin position="455"/>
        <end position="475"/>
    </location>
</feature>
<feature type="transmembrane region" description="Helical" evidence="1">
    <location>
        <begin position="489"/>
        <end position="509"/>
    </location>
</feature>
<feature type="glycosylation site" description="N-linked (GlcNAc...) asparagine" evidence="2">
    <location>
        <position position="476"/>
    </location>
</feature>
<organism evidence="10">
    <name type="scientific">Toxoplasma gondii (strain ATCC 50611 / Me49)</name>
    <dbReference type="NCBI Taxonomy" id="508771"/>
    <lineage>
        <taxon>Eukaryota</taxon>
        <taxon>Sar</taxon>
        <taxon>Alveolata</taxon>
        <taxon>Apicomplexa</taxon>
        <taxon>Conoidasida</taxon>
        <taxon>Coccidia</taxon>
        <taxon>Eucoccidiorida</taxon>
        <taxon>Eimeriorina</taxon>
        <taxon>Sarcocystidae</taxon>
        <taxon>Toxoplasma</taxon>
    </lineage>
</organism>
<proteinExistence type="evidence at protein level"/>
<accession>A0A125YQS6</accession>
<protein>
    <recommendedName>
        <fullName evidence="8">Amino acid transporter 6-1</fullName>
    </recommendedName>
    <alternativeName>
        <fullName evidence="8">Apicomplexan amino acid transporter 6-1</fullName>
        <shortName evidence="6 7">TgApiAT6-1</shortName>
    </alternativeName>
</protein>
<sequence length="566" mass="61263">MASSDSNAKLASQRLHSCAGGEESSGQCLEKQGAGARLRGWLAQLLPRADLPGARQKTPFNLNRYVLLLLYSIVVFTTGAVFYGWTALSAMIFKNDGFAYLCPKDASGVYVPDLRATQGKLYICDEQDAAVQKLYTMTFAVACLMSAGAGTLLDWLGPLWTELLGQLLNLVGWLFLAFSTVDRPLYYPALVFIGLGADASMLPTLCIRHLFPGSTGLIITILGSAASASFGIPLVLNTIVENHGVSVRDVSIGYCFFGPVLGVLVALLFMPRRGFALDDAGTIFREPDSGEGEGEAGPYALENGAQGGESQNAQETRRRKLLDPIVSSSFWTQFFSIRYFLIVLYFVVVSWATSYYQQAARRMFSEDVVSVIEVLLPLSFIPCILLGKVADVVGIIRVLFVMNTSGLLTYVFSFFKTDATGYLSACCFMVYMSLLTSQVYVYVEGTFSPNHFGKLIGISNLTGGLLSLVSNPLYENITVNRDNGDPLCIQIAMTALLCVQYVWIFILGFLKSGNSPLLNMDVKAKDDADAEKRADNAPGAEERTSAPSGSSSELAAVTVTPPQDSA</sequence>